<gene>
    <name type="primary">trmt44</name>
    <name type="ORF">CG9386</name>
</gene>
<organism>
    <name type="scientific">Drosophila melanogaster</name>
    <name type="common">Fruit fly</name>
    <dbReference type="NCBI Taxonomy" id="7227"/>
    <lineage>
        <taxon>Eukaryota</taxon>
        <taxon>Metazoa</taxon>
        <taxon>Ecdysozoa</taxon>
        <taxon>Arthropoda</taxon>
        <taxon>Hexapoda</taxon>
        <taxon>Insecta</taxon>
        <taxon>Pterygota</taxon>
        <taxon>Neoptera</taxon>
        <taxon>Endopterygota</taxon>
        <taxon>Diptera</taxon>
        <taxon>Brachycera</taxon>
        <taxon>Muscomorpha</taxon>
        <taxon>Ephydroidea</taxon>
        <taxon>Drosophilidae</taxon>
        <taxon>Drosophila</taxon>
        <taxon>Sophophora</taxon>
    </lineage>
</organism>
<proteinExistence type="evidence at transcript level"/>
<keyword id="KW-0963">Cytoplasm</keyword>
<keyword id="KW-0489">Methyltransferase</keyword>
<keyword id="KW-1185">Reference proteome</keyword>
<keyword id="KW-0949">S-adenosyl-L-methionine</keyword>
<keyword id="KW-0808">Transferase</keyword>
<keyword id="KW-0819">tRNA processing</keyword>
<evidence type="ECO:0000250" key="1"/>
<evidence type="ECO:0000305" key="2"/>
<sequence>MAAVEEAQFWQAIGILIKNYHALNKKIFEVVITQVTKQQNGRVCESSAEELAMSLKEDPSQRTCTGFTIGFKLLSKKLAENILGTGIVDFENCLYECQFASDSIEGFSVGLLGGEFKLKSKSNTNWLEFVLRPKLLSWSQSKQDEAKVKSLGLVNVEKYNDLYKELKQRHSQRLLEHWKTAQESTDPLKFIYEDLAIAAYLIVLWSQTQSEPTAFADLGCGNGLLVHVLNAEGYKGYGYDIRKRKLWSLYPPDTQRSLIEKAVEPNSFRLDFPGVDWLIGNHSDELSPWLPVLAGRLNINYFLLPCCPFELSGAKFRRRNTKISAYQDFFQYVTQVSHECGYEILQDRLKIPSTKRLALLGIKRKASKAIEDLEYFVQEELRKYKTGDAKIKLREKEESVRNCTQVDKTIIDGLVFKIFKLILDSNEDKWSGRLPMREIAQALTKEELSGIKSECGGIKTLLRNKHEVFEFCGGDLIGIRTPKPTATLPKSHLTIKKRSCFFKLHHPLGCPLDDAECSFIH</sequence>
<reference key="1">
    <citation type="journal article" date="2000" name="Science">
        <title>The genome sequence of Drosophila melanogaster.</title>
        <authorList>
            <person name="Adams M.D."/>
            <person name="Celniker S.E."/>
            <person name="Holt R.A."/>
            <person name="Evans C.A."/>
            <person name="Gocayne J.D."/>
            <person name="Amanatides P.G."/>
            <person name="Scherer S.E."/>
            <person name="Li P.W."/>
            <person name="Hoskins R.A."/>
            <person name="Galle R.F."/>
            <person name="George R.A."/>
            <person name="Lewis S.E."/>
            <person name="Richards S."/>
            <person name="Ashburner M."/>
            <person name="Henderson S.N."/>
            <person name="Sutton G.G."/>
            <person name="Wortman J.R."/>
            <person name="Yandell M.D."/>
            <person name="Zhang Q."/>
            <person name="Chen L.X."/>
            <person name="Brandon R.C."/>
            <person name="Rogers Y.-H.C."/>
            <person name="Blazej R.G."/>
            <person name="Champe M."/>
            <person name="Pfeiffer B.D."/>
            <person name="Wan K.H."/>
            <person name="Doyle C."/>
            <person name="Baxter E.G."/>
            <person name="Helt G."/>
            <person name="Nelson C.R."/>
            <person name="Miklos G.L.G."/>
            <person name="Abril J.F."/>
            <person name="Agbayani A."/>
            <person name="An H.-J."/>
            <person name="Andrews-Pfannkoch C."/>
            <person name="Baldwin D."/>
            <person name="Ballew R.M."/>
            <person name="Basu A."/>
            <person name="Baxendale J."/>
            <person name="Bayraktaroglu L."/>
            <person name="Beasley E.M."/>
            <person name="Beeson K.Y."/>
            <person name="Benos P.V."/>
            <person name="Berman B.P."/>
            <person name="Bhandari D."/>
            <person name="Bolshakov S."/>
            <person name="Borkova D."/>
            <person name="Botchan M.R."/>
            <person name="Bouck J."/>
            <person name="Brokstein P."/>
            <person name="Brottier P."/>
            <person name="Burtis K.C."/>
            <person name="Busam D.A."/>
            <person name="Butler H."/>
            <person name="Cadieu E."/>
            <person name="Center A."/>
            <person name="Chandra I."/>
            <person name="Cherry J.M."/>
            <person name="Cawley S."/>
            <person name="Dahlke C."/>
            <person name="Davenport L.B."/>
            <person name="Davies P."/>
            <person name="de Pablos B."/>
            <person name="Delcher A."/>
            <person name="Deng Z."/>
            <person name="Mays A.D."/>
            <person name="Dew I."/>
            <person name="Dietz S.M."/>
            <person name="Dodson K."/>
            <person name="Doup L.E."/>
            <person name="Downes M."/>
            <person name="Dugan-Rocha S."/>
            <person name="Dunkov B.C."/>
            <person name="Dunn P."/>
            <person name="Durbin K.J."/>
            <person name="Evangelista C.C."/>
            <person name="Ferraz C."/>
            <person name="Ferriera S."/>
            <person name="Fleischmann W."/>
            <person name="Fosler C."/>
            <person name="Gabrielian A.E."/>
            <person name="Garg N.S."/>
            <person name="Gelbart W.M."/>
            <person name="Glasser K."/>
            <person name="Glodek A."/>
            <person name="Gong F."/>
            <person name="Gorrell J.H."/>
            <person name="Gu Z."/>
            <person name="Guan P."/>
            <person name="Harris M."/>
            <person name="Harris N.L."/>
            <person name="Harvey D.A."/>
            <person name="Heiman T.J."/>
            <person name="Hernandez J.R."/>
            <person name="Houck J."/>
            <person name="Hostin D."/>
            <person name="Houston K.A."/>
            <person name="Howland T.J."/>
            <person name="Wei M.-H."/>
            <person name="Ibegwam C."/>
            <person name="Jalali M."/>
            <person name="Kalush F."/>
            <person name="Karpen G.H."/>
            <person name="Ke Z."/>
            <person name="Kennison J.A."/>
            <person name="Ketchum K.A."/>
            <person name="Kimmel B.E."/>
            <person name="Kodira C.D."/>
            <person name="Kraft C.L."/>
            <person name="Kravitz S."/>
            <person name="Kulp D."/>
            <person name="Lai Z."/>
            <person name="Lasko P."/>
            <person name="Lei Y."/>
            <person name="Levitsky A.A."/>
            <person name="Li J.H."/>
            <person name="Li Z."/>
            <person name="Liang Y."/>
            <person name="Lin X."/>
            <person name="Liu X."/>
            <person name="Mattei B."/>
            <person name="McIntosh T.C."/>
            <person name="McLeod M.P."/>
            <person name="McPherson D."/>
            <person name="Merkulov G."/>
            <person name="Milshina N.V."/>
            <person name="Mobarry C."/>
            <person name="Morris J."/>
            <person name="Moshrefi A."/>
            <person name="Mount S.M."/>
            <person name="Moy M."/>
            <person name="Murphy B."/>
            <person name="Murphy L."/>
            <person name="Muzny D.M."/>
            <person name="Nelson D.L."/>
            <person name="Nelson D.R."/>
            <person name="Nelson K.A."/>
            <person name="Nixon K."/>
            <person name="Nusskern D.R."/>
            <person name="Pacleb J.M."/>
            <person name="Palazzolo M."/>
            <person name="Pittman G.S."/>
            <person name="Pan S."/>
            <person name="Pollard J."/>
            <person name="Puri V."/>
            <person name="Reese M.G."/>
            <person name="Reinert K."/>
            <person name="Remington K."/>
            <person name="Saunders R.D.C."/>
            <person name="Scheeler F."/>
            <person name="Shen H."/>
            <person name="Shue B.C."/>
            <person name="Siden-Kiamos I."/>
            <person name="Simpson M."/>
            <person name="Skupski M.P."/>
            <person name="Smith T.J."/>
            <person name="Spier E."/>
            <person name="Spradling A.C."/>
            <person name="Stapleton M."/>
            <person name="Strong R."/>
            <person name="Sun E."/>
            <person name="Svirskas R."/>
            <person name="Tector C."/>
            <person name="Turner R."/>
            <person name="Venter E."/>
            <person name="Wang A.H."/>
            <person name="Wang X."/>
            <person name="Wang Z.-Y."/>
            <person name="Wassarman D.A."/>
            <person name="Weinstock G.M."/>
            <person name="Weissenbach J."/>
            <person name="Williams S.M."/>
            <person name="Woodage T."/>
            <person name="Worley K.C."/>
            <person name="Wu D."/>
            <person name="Yang S."/>
            <person name="Yao Q.A."/>
            <person name="Ye J."/>
            <person name="Yeh R.-F."/>
            <person name="Zaveri J.S."/>
            <person name="Zhan M."/>
            <person name="Zhang G."/>
            <person name="Zhao Q."/>
            <person name="Zheng L."/>
            <person name="Zheng X.H."/>
            <person name="Zhong F.N."/>
            <person name="Zhong W."/>
            <person name="Zhou X."/>
            <person name="Zhu S.C."/>
            <person name="Zhu X."/>
            <person name="Smith H.O."/>
            <person name="Gibbs R.A."/>
            <person name="Myers E.W."/>
            <person name="Rubin G.M."/>
            <person name="Venter J.C."/>
        </authorList>
    </citation>
    <scope>NUCLEOTIDE SEQUENCE [LARGE SCALE GENOMIC DNA]</scope>
    <source>
        <strain>Berkeley</strain>
    </source>
</reference>
<reference key="2">
    <citation type="journal article" date="2002" name="Genome Biol.">
        <title>Annotation of the Drosophila melanogaster euchromatic genome: a systematic review.</title>
        <authorList>
            <person name="Misra S."/>
            <person name="Crosby M.A."/>
            <person name="Mungall C.J."/>
            <person name="Matthews B.B."/>
            <person name="Campbell K.S."/>
            <person name="Hradecky P."/>
            <person name="Huang Y."/>
            <person name="Kaminker J.S."/>
            <person name="Millburn G.H."/>
            <person name="Prochnik S.E."/>
            <person name="Smith C.D."/>
            <person name="Tupy J.L."/>
            <person name="Whitfield E.J."/>
            <person name="Bayraktaroglu L."/>
            <person name="Berman B.P."/>
            <person name="Bettencourt B.R."/>
            <person name="Celniker S.E."/>
            <person name="de Grey A.D.N.J."/>
            <person name="Drysdale R.A."/>
            <person name="Harris N.L."/>
            <person name="Richter J."/>
            <person name="Russo S."/>
            <person name="Schroeder A.J."/>
            <person name="Shu S.Q."/>
            <person name="Stapleton M."/>
            <person name="Yamada C."/>
            <person name="Ashburner M."/>
            <person name="Gelbart W.M."/>
            <person name="Rubin G.M."/>
            <person name="Lewis S.E."/>
        </authorList>
    </citation>
    <scope>GENOME REANNOTATION</scope>
    <source>
        <strain>Berkeley</strain>
    </source>
</reference>
<reference key="3">
    <citation type="journal article" date="2002" name="Genome Biol.">
        <title>A Drosophila full-length cDNA resource.</title>
        <authorList>
            <person name="Stapleton M."/>
            <person name="Carlson J.W."/>
            <person name="Brokstein P."/>
            <person name="Yu C."/>
            <person name="Champe M."/>
            <person name="George R.A."/>
            <person name="Guarin H."/>
            <person name="Kronmiller B."/>
            <person name="Pacleb J.M."/>
            <person name="Park S."/>
            <person name="Wan K.H."/>
            <person name="Rubin G.M."/>
            <person name="Celniker S.E."/>
        </authorList>
    </citation>
    <scope>NUCLEOTIDE SEQUENCE [LARGE SCALE MRNA] OF 4-521</scope>
    <source>
        <strain>Berkeley</strain>
        <tissue>Embryo</tissue>
    </source>
</reference>
<name>TRM44_DROME</name>
<feature type="chain" id="PRO_0000249899" description="Probable tRNA (uracil-O(2)-)-methyltransferase">
    <location>
        <begin position="1"/>
        <end position="521"/>
    </location>
</feature>
<comment type="function">
    <text evidence="1">Probable adenosyl-L-methionine (AdoMet)-dependent tRNA (uracil-O(2)-)-methyltransferase.</text>
</comment>
<comment type="catalytic activity">
    <reaction>
        <text>uridine(44) in tRNA(Ser) + S-adenosyl-L-methionine = 2'-O-methyluridine(44) in tRNA(Ser) + S-adenosyl-L-homocysteine + H(+)</text>
        <dbReference type="Rhea" id="RHEA:43100"/>
        <dbReference type="Rhea" id="RHEA-COMP:10339"/>
        <dbReference type="Rhea" id="RHEA-COMP:10340"/>
        <dbReference type="ChEBI" id="CHEBI:15378"/>
        <dbReference type="ChEBI" id="CHEBI:57856"/>
        <dbReference type="ChEBI" id="CHEBI:59789"/>
        <dbReference type="ChEBI" id="CHEBI:65315"/>
        <dbReference type="ChEBI" id="CHEBI:74478"/>
        <dbReference type="EC" id="2.1.1.211"/>
    </reaction>
</comment>
<comment type="subcellular location">
    <subcellularLocation>
        <location evidence="2">Cytoplasm</location>
    </subcellularLocation>
</comment>
<comment type="similarity">
    <text evidence="2">Belongs to the TRM44 family.</text>
</comment>
<comment type="sequence caution" evidence="2">
    <conflict type="erroneous initiation">
        <sequence resource="EMBL-CDS" id="AAL48928"/>
    </conflict>
    <text>Truncated N-terminus.</text>
</comment>
<protein>
    <recommendedName>
        <fullName>Probable tRNA (uracil-O(2)-)-methyltransferase</fullName>
        <ecNumber>2.1.1.211</ecNumber>
    </recommendedName>
</protein>
<dbReference type="EC" id="2.1.1.211"/>
<dbReference type="EMBL" id="AE014297">
    <property type="protein sequence ID" value="AAF54397.2"/>
    <property type="molecule type" value="Genomic_DNA"/>
</dbReference>
<dbReference type="EMBL" id="AY071306">
    <property type="protein sequence ID" value="AAL48928.1"/>
    <property type="status" value="ALT_INIT"/>
    <property type="molecule type" value="mRNA"/>
</dbReference>
<dbReference type="RefSeq" id="NP_649904.2">
    <property type="nucleotide sequence ID" value="NM_141647.5"/>
</dbReference>
<dbReference type="FunCoup" id="Q9VHB9">
    <property type="interactions" value="1519"/>
</dbReference>
<dbReference type="STRING" id="7227.FBpp0081593"/>
<dbReference type="PaxDb" id="7227-FBpp0081593"/>
<dbReference type="EnsemblMetazoa" id="FBtr0082115">
    <property type="protein sequence ID" value="FBpp0081593"/>
    <property type="gene ID" value="FBgn0037708"/>
</dbReference>
<dbReference type="GeneID" id="41148"/>
<dbReference type="KEGG" id="dme:Dmel_CG9386"/>
<dbReference type="UCSC" id="CG9386-RA">
    <property type="organism name" value="d. melanogaster"/>
</dbReference>
<dbReference type="AGR" id="FB:FBgn0037708"/>
<dbReference type="FlyBase" id="FBgn0037708">
    <property type="gene designation" value="CG9386"/>
</dbReference>
<dbReference type="VEuPathDB" id="VectorBase:FBgn0037708"/>
<dbReference type="eggNOG" id="KOG3790">
    <property type="taxonomic scope" value="Eukaryota"/>
</dbReference>
<dbReference type="GeneTree" id="ENSGT00390000000645"/>
<dbReference type="HOGENOM" id="CLU_021025_1_0_1"/>
<dbReference type="InParanoid" id="Q9VHB9"/>
<dbReference type="OMA" id="CFFKLHH"/>
<dbReference type="OrthoDB" id="10047021at2759"/>
<dbReference type="PhylomeDB" id="Q9VHB9"/>
<dbReference type="BioGRID-ORCS" id="41148">
    <property type="hits" value="0 hits in 1 CRISPR screen"/>
</dbReference>
<dbReference type="ChiTaRS" id="CG9386">
    <property type="organism name" value="fly"/>
</dbReference>
<dbReference type="GenomeRNAi" id="41148"/>
<dbReference type="PRO" id="PR:Q9VHB9"/>
<dbReference type="Proteomes" id="UP000000803">
    <property type="component" value="Chromosome 3R"/>
</dbReference>
<dbReference type="Bgee" id="FBgn0037708">
    <property type="expression patterns" value="Expressed in eye disc (Drosophila) and 43 other cell types or tissues"/>
</dbReference>
<dbReference type="GO" id="GO:0005737">
    <property type="term" value="C:cytoplasm"/>
    <property type="evidence" value="ECO:0007669"/>
    <property type="project" value="UniProtKB-SubCell"/>
</dbReference>
<dbReference type="GO" id="GO:0016300">
    <property type="term" value="F:tRNA (uridine) methyltransferase activity"/>
    <property type="evidence" value="ECO:0000318"/>
    <property type="project" value="GO_Central"/>
</dbReference>
<dbReference type="GO" id="GO:0141101">
    <property type="term" value="F:tRNA(Ser) (uridine(44)-2'-O-)-methyltransferase activity"/>
    <property type="evidence" value="ECO:0007669"/>
    <property type="project" value="UniProtKB-EC"/>
</dbReference>
<dbReference type="GO" id="GO:0030488">
    <property type="term" value="P:tRNA methylation"/>
    <property type="evidence" value="ECO:0000318"/>
    <property type="project" value="GO_Central"/>
</dbReference>
<dbReference type="InterPro" id="IPR011671">
    <property type="entry name" value="tRNA_uracil_MeTrfase"/>
</dbReference>
<dbReference type="PANTHER" id="PTHR21210">
    <property type="entry name" value="TRNA (URACIL-O(2)-)-METHYLTRANSFERASE-RELATED"/>
    <property type="match status" value="1"/>
</dbReference>
<dbReference type="PANTHER" id="PTHR21210:SF0">
    <property type="entry name" value="TRNA (URACIL-O(2)-)-METHYLTRANSFERASE-RELATED"/>
    <property type="match status" value="1"/>
</dbReference>
<dbReference type="Pfam" id="PF07757">
    <property type="entry name" value="AdoMet_MTase"/>
    <property type="match status" value="1"/>
</dbReference>
<accession>Q9VHB9</accession>